<organism>
    <name type="scientific">Brucella melitensis biotype 2 (strain ATCC 23457)</name>
    <dbReference type="NCBI Taxonomy" id="546272"/>
    <lineage>
        <taxon>Bacteria</taxon>
        <taxon>Pseudomonadati</taxon>
        <taxon>Pseudomonadota</taxon>
        <taxon>Alphaproteobacteria</taxon>
        <taxon>Hyphomicrobiales</taxon>
        <taxon>Brucellaceae</taxon>
        <taxon>Brucella/Ochrobactrum group</taxon>
        <taxon>Brucella</taxon>
    </lineage>
</organism>
<keyword id="KW-0436">Ligase</keyword>
<keyword id="KW-0597">Phosphoprotein</keyword>
<keyword id="KW-0662">Pyridine nucleotide biosynthesis</keyword>
<comment type="function">
    <text evidence="1">Catalyzes the synthesis of beta-nicotinate D-ribonucleotide from nicotinate and 5-phospho-D-ribose 1-phosphate at the expense of ATP.</text>
</comment>
<comment type="catalytic activity">
    <reaction evidence="1">
        <text>nicotinate + 5-phospho-alpha-D-ribose 1-diphosphate + ATP + H2O = nicotinate beta-D-ribonucleotide + ADP + phosphate + diphosphate</text>
        <dbReference type="Rhea" id="RHEA:36163"/>
        <dbReference type="ChEBI" id="CHEBI:15377"/>
        <dbReference type="ChEBI" id="CHEBI:30616"/>
        <dbReference type="ChEBI" id="CHEBI:32544"/>
        <dbReference type="ChEBI" id="CHEBI:33019"/>
        <dbReference type="ChEBI" id="CHEBI:43474"/>
        <dbReference type="ChEBI" id="CHEBI:57502"/>
        <dbReference type="ChEBI" id="CHEBI:58017"/>
        <dbReference type="ChEBI" id="CHEBI:456216"/>
        <dbReference type="EC" id="6.3.4.21"/>
    </reaction>
</comment>
<comment type="pathway">
    <text evidence="1">Cofactor biosynthesis; NAD(+) biosynthesis; nicotinate D-ribonucleotide from nicotinate: step 1/1.</text>
</comment>
<comment type="PTM">
    <text evidence="1">Transiently phosphorylated on a His residue during the reaction cycle. Phosphorylation strongly increases the affinity for substrates and increases the rate of nicotinate D-ribonucleotide production. Dephosphorylation regenerates the low-affinity form of the enzyme, leading to product release.</text>
</comment>
<comment type="similarity">
    <text evidence="1">Belongs to the NAPRTase family.</text>
</comment>
<proteinExistence type="inferred from homology"/>
<gene>
    <name evidence="1" type="primary">pncB</name>
    <name type="ordered locus">BMEA_A0119</name>
</gene>
<dbReference type="EC" id="6.3.4.21" evidence="1"/>
<dbReference type="EMBL" id="CP001488">
    <property type="protein sequence ID" value="ACN99930.1"/>
    <property type="molecule type" value="Genomic_DNA"/>
</dbReference>
<dbReference type="RefSeq" id="WP_002965361.1">
    <property type="nucleotide sequence ID" value="NC_012441.1"/>
</dbReference>
<dbReference type="SMR" id="C0RGH3"/>
<dbReference type="GeneID" id="97534468"/>
<dbReference type="KEGG" id="bmi:BMEA_A0119"/>
<dbReference type="HOGENOM" id="CLU_030991_1_0_5"/>
<dbReference type="UniPathway" id="UPA00253">
    <property type="reaction ID" value="UER00457"/>
</dbReference>
<dbReference type="Proteomes" id="UP000001748">
    <property type="component" value="Chromosome I"/>
</dbReference>
<dbReference type="GO" id="GO:0005829">
    <property type="term" value="C:cytosol"/>
    <property type="evidence" value="ECO:0007669"/>
    <property type="project" value="TreeGrafter"/>
</dbReference>
<dbReference type="GO" id="GO:0004516">
    <property type="term" value="F:nicotinate phosphoribosyltransferase activity"/>
    <property type="evidence" value="ECO:0007669"/>
    <property type="project" value="UniProtKB-UniRule"/>
</dbReference>
<dbReference type="GO" id="GO:0034355">
    <property type="term" value="P:NAD biosynthetic process via the salvage pathway"/>
    <property type="evidence" value="ECO:0007669"/>
    <property type="project" value="TreeGrafter"/>
</dbReference>
<dbReference type="Gene3D" id="3.20.140.10">
    <property type="entry name" value="nicotinate phosphoribosyltransferase"/>
    <property type="match status" value="1"/>
</dbReference>
<dbReference type="HAMAP" id="MF_00570">
    <property type="entry name" value="NAPRTase"/>
    <property type="match status" value="1"/>
</dbReference>
<dbReference type="InterPro" id="IPR041525">
    <property type="entry name" value="N/Namide_PRibTrfase"/>
</dbReference>
<dbReference type="InterPro" id="IPR040727">
    <property type="entry name" value="NAPRTase_N"/>
</dbReference>
<dbReference type="InterPro" id="IPR006406">
    <property type="entry name" value="Nic_PRibTrfase"/>
</dbReference>
<dbReference type="InterPro" id="IPR007229">
    <property type="entry name" value="Nic_PRibTrfase-Fam"/>
</dbReference>
<dbReference type="InterPro" id="IPR036068">
    <property type="entry name" value="Nicotinate_pribotase-like_C"/>
</dbReference>
<dbReference type="NCBIfam" id="TIGR01514">
    <property type="entry name" value="NAPRTase"/>
    <property type="match status" value="1"/>
</dbReference>
<dbReference type="NCBIfam" id="NF003704">
    <property type="entry name" value="PRK05321.1"/>
    <property type="match status" value="1"/>
</dbReference>
<dbReference type="PANTHER" id="PTHR11098">
    <property type="entry name" value="NICOTINATE PHOSPHORIBOSYLTRANSFERASE"/>
    <property type="match status" value="1"/>
</dbReference>
<dbReference type="PANTHER" id="PTHR11098:SF1">
    <property type="entry name" value="NICOTINATE PHOSPHORIBOSYLTRANSFERASE"/>
    <property type="match status" value="1"/>
</dbReference>
<dbReference type="Pfam" id="PF04095">
    <property type="entry name" value="NAPRTase"/>
    <property type="match status" value="1"/>
</dbReference>
<dbReference type="Pfam" id="PF17767">
    <property type="entry name" value="NAPRTase_N"/>
    <property type="match status" value="1"/>
</dbReference>
<dbReference type="PIRSF" id="PIRSF000484">
    <property type="entry name" value="NAPRT"/>
    <property type="match status" value="1"/>
</dbReference>
<dbReference type="SUPFAM" id="SSF51690">
    <property type="entry name" value="Nicotinate/Quinolinate PRTase C-terminal domain-like"/>
    <property type="match status" value="1"/>
</dbReference>
<dbReference type="SUPFAM" id="SSF54675">
    <property type="entry name" value="Nicotinate/Quinolinate PRTase N-terminal domain-like"/>
    <property type="match status" value="1"/>
</dbReference>
<accession>C0RGH3</accession>
<sequence length="434" mass="49909">MAKTDLARRVYNHTWKLDPIIRSLLDTDFYKLLMLQMIWGLYPRVDATFSLINRTSSVRLADEIDEGELRAQLDHARTLRFSKKEMIWLAGNTFYGRKQIFQPEFLAWLHDFQLPEYELRRKDGQYELHFHGPWTHTTMWEIPALAIINELRSRAAMKNLGPFSLDVLYARAKAKMWSKVERLRQLPDLKISDFGTRRRHSFLWQRWCVEALKEGIGSAFTGTSNVLLAMDTDLEALGTNAHELPMVLAALAKTDDELRSAPYRVLQDWNRYYGGNLLIVLPDAFGTAAFLRNAPDWVADWTGFRPDSAPPIEGGERIIEWWKSKGKDPREKLLIFSDALDVDTIEETYRHFEGRVRMGFGWGTNLTNDFAGCAPQSIDGLKAISLVCKVTDANGHPAVKLSDNPQKATGDPKEVARYLRFFGNEERVEQLVRV</sequence>
<reference key="1">
    <citation type="submission" date="2009-03" db="EMBL/GenBank/DDBJ databases">
        <title>Brucella melitensis ATCC 23457 whole genome shotgun sequencing project.</title>
        <authorList>
            <person name="Setubal J.C."/>
            <person name="Boyle S."/>
            <person name="Crasta O.R."/>
            <person name="Gillespie J.J."/>
            <person name="Kenyon R.W."/>
            <person name="Lu J."/>
            <person name="Mane S."/>
            <person name="Nagrani S."/>
            <person name="Shallom J.M."/>
            <person name="Shallom S."/>
            <person name="Shukla M."/>
            <person name="Snyder E.E."/>
            <person name="Sobral B.W."/>
            <person name="Wattam A.R."/>
            <person name="Will R."/>
            <person name="Williams K."/>
            <person name="Yoo H."/>
            <person name="Munk C."/>
            <person name="Tapia R."/>
            <person name="Han C."/>
            <person name="Detter J.C."/>
            <person name="Bruce D."/>
            <person name="Brettin T.S."/>
        </authorList>
    </citation>
    <scope>NUCLEOTIDE SEQUENCE [LARGE SCALE GENOMIC DNA]</scope>
    <source>
        <strain>ATCC 23457</strain>
    </source>
</reference>
<feature type="chain" id="PRO_1000146835" description="Nicotinate phosphoribosyltransferase">
    <location>
        <begin position="1"/>
        <end position="434"/>
    </location>
</feature>
<feature type="modified residue" description="Phosphohistidine; by autocatalysis" evidence="1">
    <location>
        <position position="242"/>
    </location>
</feature>
<protein>
    <recommendedName>
        <fullName evidence="1">Nicotinate phosphoribosyltransferase</fullName>
        <shortName evidence="1">NAPRTase</shortName>
        <ecNumber evidence="1">6.3.4.21</ecNumber>
    </recommendedName>
</protein>
<name>PNCB_BRUMB</name>
<evidence type="ECO:0000255" key="1">
    <source>
        <dbReference type="HAMAP-Rule" id="MF_00570"/>
    </source>
</evidence>